<feature type="chain" id="PRO_0000258913" description="Anaerobic glycerol-3-phosphate dehydrogenase subunit B">
    <location>
        <begin position="1"/>
        <end position="424"/>
    </location>
</feature>
<accession>Q66FX5</accession>
<dbReference type="EC" id="1.1.5.3" evidence="1"/>
<dbReference type="EMBL" id="BX936398">
    <property type="protein sequence ID" value="CAH19450.1"/>
    <property type="molecule type" value="Genomic_DNA"/>
</dbReference>
<dbReference type="RefSeq" id="WP_011191516.1">
    <property type="nucleotide sequence ID" value="NC_006155.1"/>
</dbReference>
<dbReference type="GeneID" id="49787809"/>
<dbReference type="KEGG" id="ypo:BZ17_2373"/>
<dbReference type="KEGG" id="yps:YPTB0210"/>
<dbReference type="PATRIC" id="fig|273123.14.peg.2495"/>
<dbReference type="UniPathway" id="UPA00618">
    <property type="reaction ID" value="UER00673"/>
</dbReference>
<dbReference type="Proteomes" id="UP000001011">
    <property type="component" value="Chromosome"/>
</dbReference>
<dbReference type="GO" id="GO:0009331">
    <property type="term" value="C:glycerol-3-phosphate dehydrogenase (FAD) complex"/>
    <property type="evidence" value="ECO:0007669"/>
    <property type="project" value="InterPro"/>
</dbReference>
<dbReference type="GO" id="GO:0004368">
    <property type="term" value="F:glycerol-3-phosphate dehydrogenase (quinone) activity"/>
    <property type="evidence" value="ECO:0007669"/>
    <property type="project" value="UniProtKB-UniRule"/>
</dbReference>
<dbReference type="GO" id="GO:0019563">
    <property type="term" value="P:glycerol catabolic process"/>
    <property type="evidence" value="ECO:0007669"/>
    <property type="project" value="UniProtKB-UniRule"/>
</dbReference>
<dbReference type="Gene3D" id="3.50.50.60">
    <property type="entry name" value="FAD/NAD(P)-binding domain"/>
    <property type="match status" value="1"/>
</dbReference>
<dbReference type="HAMAP" id="MF_00753">
    <property type="entry name" value="Glycerol3P_GlpB"/>
    <property type="match status" value="1"/>
</dbReference>
<dbReference type="InterPro" id="IPR003953">
    <property type="entry name" value="FAD-dep_OxRdtase_2_FAD-bd"/>
</dbReference>
<dbReference type="InterPro" id="IPR036188">
    <property type="entry name" value="FAD/NAD-bd_sf"/>
</dbReference>
<dbReference type="InterPro" id="IPR009158">
    <property type="entry name" value="G3P_DH_GlpB_su"/>
</dbReference>
<dbReference type="NCBIfam" id="TIGR03378">
    <property type="entry name" value="glycerol3P_GlpB"/>
    <property type="match status" value="1"/>
</dbReference>
<dbReference type="NCBIfam" id="NF003718">
    <property type="entry name" value="PRK05329.1-1"/>
    <property type="match status" value="1"/>
</dbReference>
<dbReference type="NCBIfam" id="NF003719">
    <property type="entry name" value="PRK05329.1-2"/>
    <property type="match status" value="1"/>
</dbReference>
<dbReference type="NCBIfam" id="NF003720">
    <property type="entry name" value="PRK05329.1-3"/>
    <property type="match status" value="1"/>
</dbReference>
<dbReference type="NCBIfam" id="NF003721">
    <property type="entry name" value="PRK05329.1-4"/>
    <property type="match status" value="1"/>
</dbReference>
<dbReference type="PANTHER" id="PTHR43734:SF7">
    <property type="entry name" value="4,4'-DIAPONEUROSPORENE OXYGENASE"/>
    <property type="match status" value="1"/>
</dbReference>
<dbReference type="PANTHER" id="PTHR43734">
    <property type="entry name" value="PHYTOENE DESATURASE"/>
    <property type="match status" value="1"/>
</dbReference>
<dbReference type="Pfam" id="PF00890">
    <property type="entry name" value="FAD_binding_2"/>
    <property type="match status" value="1"/>
</dbReference>
<dbReference type="PIRSF" id="PIRSF000141">
    <property type="entry name" value="Anaerobic_G3P_dh"/>
    <property type="match status" value="1"/>
</dbReference>
<dbReference type="SUPFAM" id="SSF51905">
    <property type="entry name" value="FAD/NAD(P)-binding domain"/>
    <property type="match status" value="1"/>
</dbReference>
<reference key="1">
    <citation type="journal article" date="2004" name="Proc. Natl. Acad. Sci. U.S.A.">
        <title>Insights into the evolution of Yersinia pestis through whole-genome comparison with Yersinia pseudotuberculosis.</title>
        <authorList>
            <person name="Chain P.S.G."/>
            <person name="Carniel E."/>
            <person name="Larimer F.W."/>
            <person name="Lamerdin J."/>
            <person name="Stoutland P.O."/>
            <person name="Regala W.M."/>
            <person name="Georgescu A.M."/>
            <person name="Vergez L.M."/>
            <person name="Land M.L."/>
            <person name="Motin V.L."/>
            <person name="Brubaker R.R."/>
            <person name="Fowler J."/>
            <person name="Hinnebusch J."/>
            <person name="Marceau M."/>
            <person name="Medigue C."/>
            <person name="Simonet M."/>
            <person name="Chenal-Francisque V."/>
            <person name="Souza B."/>
            <person name="Dacheux D."/>
            <person name="Elliott J.M."/>
            <person name="Derbise A."/>
            <person name="Hauser L.J."/>
            <person name="Garcia E."/>
        </authorList>
    </citation>
    <scope>NUCLEOTIDE SEQUENCE [LARGE SCALE GENOMIC DNA]</scope>
    <source>
        <strain>IP32953</strain>
    </source>
</reference>
<comment type="function">
    <text evidence="1">Conversion of glycerol 3-phosphate to dihydroxyacetone. Uses fumarate or nitrate as electron acceptor.</text>
</comment>
<comment type="catalytic activity">
    <reaction evidence="1">
        <text>a quinone + sn-glycerol 3-phosphate = dihydroxyacetone phosphate + a quinol</text>
        <dbReference type="Rhea" id="RHEA:18977"/>
        <dbReference type="ChEBI" id="CHEBI:24646"/>
        <dbReference type="ChEBI" id="CHEBI:57597"/>
        <dbReference type="ChEBI" id="CHEBI:57642"/>
        <dbReference type="ChEBI" id="CHEBI:132124"/>
        <dbReference type="EC" id="1.1.5.3"/>
    </reaction>
</comment>
<comment type="cofactor">
    <cofactor evidence="1">
        <name>FMN</name>
        <dbReference type="ChEBI" id="CHEBI:58210"/>
    </cofactor>
</comment>
<comment type="pathway">
    <text evidence="1">Polyol metabolism; glycerol degradation via glycerol kinase pathway; glycerone phosphate from sn-glycerol 3-phosphate (anaerobic route): step 1/1.</text>
</comment>
<comment type="subunit">
    <text evidence="1">Composed of a catalytic GlpA/B dimer and of membrane bound GlpC.</text>
</comment>
<comment type="similarity">
    <text evidence="1">Belongs to the anaerobic G-3-P dehydrogenase subunit B family.</text>
</comment>
<sequence>MKFDVIIIGGGLAGLACGIRLAEQGKYCAIVSAGQNALHFSSGSLDLLAKLPDGRAVSQPLSALSALAELAPEHPYSKMRNITQLDELVQEAEALLRRCGLDIVGSSAENHLRLTPLGSCRPTWLSLADIPVAPLNGPLPWQRVAVIGIEGFLDFQPQMVASALQDQGIDATADYLHLPALDRLRDNPSEFRAVNIARILDLPENRQPLADELSRLSSTAEMILLPACIGLDKSAPLDALRAVVGKPIQLLPTLPPSLLGMRLHQALRHRFQQLGGLVMPGDAVLRAELVDNRITGLYSRNHGDIPLRAAQMVLASGSFFSNGLVATFDKVYEPILDLDILSLPHRADWSHSNLFAPQPYLQFGVNTDNHLRPLRGGVALENLHAIGAVLGGYDPLQQGCGAGVSLTSAVFVAEQIISEMAVTL</sequence>
<evidence type="ECO:0000255" key="1">
    <source>
        <dbReference type="HAMAP-Rule" id="MF_00753"/>
    </source>
</evidence>
<gene>
    <name evidence="1" type="primary">glpB</name>
    <name type="ordered locus">YPTB0210</name>
</gene>
<protein>
    <recommendedName>
        <fullName evidence="1">Anaerobic glycerol-3-phosphate dehydrogenase subunit B</fullName>
        <shortName evidence="1">Anaerobic G-3-P dehydrogenase subunit B</shortName>
        <shortName evidence="1">Anaerobic G3Pdhase B</shortName>
        <ecNumber evidence="1">1.1.5.3</ecNumber>
    </recommendedName>
</protein>
<organism>
    <name type="scientific">Yersinia pseudotuberculosis serotype I (strain IP32953)</name>
    <dbReference type="NCBI Taxonomy" id="273123"/>
    <lineage>
        <taxon>Bacteria</taxon>
        <taxon>Pseudomonadati</taxon>
        <taxon>Pseudomonadota</taxon>
        <taxon>Gammaproteobacteria</taxon>
        <taxon>Enterobacterales</taxon>
        <taxon>Yersiniaceae</taxon>
        <taxon>Yersinia</taxon>
    </lineage>
</organism>
<keyword id="KW-0285">Flavoprotein</keyword>
<keyword id="KW-0288">FMN</keyword>
<keyword id="KW-0560">Oxidoreductase</keyword>
<name>GLPB_YERPS</name>
<proteinExistence type="inferred from homology"/>